<dbReference type="EC" id="2.6.1.1" evidence="1"/>
<dbReference type="EMBL" id="X03629">
    <property type="protein sequence ID" value="CAA27279.1"/>
    <property type="molecule type" value="Genomic_DNA"/>
</dbReference>
<dbReference type="EMBL" id="X05904">
    <property type="protein sequence ID" value="CAA29333.1"/>
    <property type="molecule type" value="Genomic_DNA"/>
</dbReference>
<dbReference type="EMBL" id="U00096">
    <property type="protein sequence ID" value="AAC74014.1"/>
    <property type="molecule type" value="Genomic_DNA"/>
</dbReference>
<dbReference type="EMBL" id="AP009048">
    <property type="protein sequence ID" value="BAA35674.1"/>
    <property type="molecule type" value="Genomic_DNA"/>
</dbReference>
<dbReference type="PIR" id="A00598">
    <property type="entry name" value="XNECD"/>
</dbReference>
<dbReference type="RefSeq" id="NP_415448.1">
    <property type="nucleotide sequence ID" value="NC_000913.3"/>
</dbReference>
<dbReference type="RefSeq" id="WP_000462687.1">
    <property type="nucleotide sequence ID" value="NZ_STEB01000006.1"/>
</dbReference>
<dbReference type="PDB" id="1AAM">
    <property type="method" value="X-ray"/>
    <property type="resolution" value="2.80 A"/>
    <property type="chains" value="A=1-396"/>
</dbReference>
<dbReference type="PDB" id="1AAW">
    <property type="method" value="X-ray"/>
    <property type="resolution" value="2.40 A"/>
    <property type="chains" value="A=1-396"/>
</dbReference>
<dbReference type="PDB" id="1AHE">
    <property type="method" value="X-ray"/>
    <property type="resolution" value="2.30 A"/>
    <property type="chains" value="A/B=1-396"/>
</dbReference>
<dbReference type="PDB" id="1AHF">
    <property type="method" value="X-ray"/>
    <property type="resolution" value="2.30 A"/>
    <property type="chains" value="A/B=1-396"/>
</dbReference>
<dbReference type="PDB" id="1AHG">
    <property type="method" value="X-ray"/>
    <property type="resolution" value="2.50 A"/>
    <property type="chains" value="A/B=1-396"/>
</dbReference>
<dbReference type="PDB" id="1AHX">
    <property type="method" value="X-ray"/>
    <property type="resolution" value="2.00 A"/>
    <property type="chains" value="A/B=1-396"/>
</dbReference>
<dbReference type="PDB" id="1AHY">
    <property type="method" value="X-ray"/>
    <property type="resolution" value="2.30 A"/>
    <property type="chains" value="A/B=1-396"/>
</dbReference>
<dbReference type="PDB" id="1AIA">
    <property type="method" value="X-ray"/>
    <property type="resolution" value="2.20 A"/>
    <property type="chains" value="A/B=1-396"/>
</dbReference>
<dbReference type="PDB" id="1AIB">
    <property type="method" value="X-ray"/>
    <property type="resolution" value="2.80 A"/>
    <property type="chains" value="A/B=1-396"/>
</dbReference>
<dbReference type="PDB" id="1AIC">
    <property type="method" value="X-ray"/>
    <property type="resolution" value="2.40 A"/>
    <property type="chains" value="A/B=1-396"/>
</dbReference>
<dbReference type="PDB" id="1AMQ">
    <property type="method" value="X-ray"/>
    <property type="resolution" value="2.20 A"/>
    <property type="chains" value="A=1-396"/>
</dbReference>
<dbReference type="PDB" id="1AMR">
    <property type="method" value="X-ray"/>
    <property type="resolution" value="2.10 A"/>
    <property type="chains" value="A=1-396"/>
</dbReference>
<dbReference type="PDB" id="1AMS">
    <property type="method" value="X-ray"/>
    <property type="resolution" value="2.70 A"/>
    <property type="chains" value="A=1-396"/>
</dbReference>
<dbReference type="PDB" id="1ARG">
    <property type="method" value="X-ray"/>
    <property type="resolution" value="2.20 A"/>
    <property type="chains" value="A/B=1-396"/>
</dbReference>
<dbReference type="PDB" id="1ARH">
    <property type="method" value="X-ray"/>
    <property type="resolution" value="2.30 A"/>
    <property type="chains" value="A/B=1-396"/>
</dbReference>
<dbReference type="PDB" id="1ARI">
    <property type="method" value="X-ray"/>
    <property type="resolution" value="2.30 A"/>
    <property type="chains" value="A/B=1-396"/>
</dbReference>
<dbReference type="PDB" id="1ARS">
    <property type="method" value="X-ray"/>
    <property type="resolution" value="1.80 A"/>
    <property type="chains" value="A=1-396"/>
</dbReference>
<dbReference type="PDB" id="1ART">
    <property type="method" value="X-ray"/>
    <property type="resolution" value="1.80 A"/>
    <property type="chains" value="A=1-396"/>
</dbReference>
<dbReference type="PDB" id="1ASA">
    <property type="method" value="X-ray"/>
    <property type="resolution" value="2.40 A"/>
    <property type="chains" value="A=1-396"/>
</dbReference>
<dbReference type="PDB" id="1ASB">
    <property type="method" value="X-ray"/>
    <property type="resolution" value="2.60 A"/>
    <property type="chains" value="A=1-396"/>
</dbReference>
<dbReference type="PDB" id="1ASC">
    <property type="method" value="X-ray"/>
    <property type="resolution" value="2.40 A"/>
    <property type="chains" value="A=1-396"/>
</dbReference>
<dbReference type="PDB" id="1ASD">
    <property type="method" value="X-ray"/>
    <property type="resolution" value="2.20 A"/>
    <property type="chains" value="A=1-396"/>
</dbReference>
<dbReference type="PDB" id="1ASE">
    <property type="method" value="X-ray"/>
    <property type="resolution" value="2.50 A"/>
    <property type="chains" value="A=1-396"/>
</dbReference>
<dbReference type="PDB" id="1ASF">
    <property type="method" value="X-ray"/>
    <property type="resolution" value="2.80 A"/>
    <property type="chains" value="A=1-396"/>
</dbReference>
<dbReference type="PDB" id="1ASG">
    <property type="method" value="X-ray"/>
    <property type="resolution" value="2.80 A"/>
    <property type="chains" value="A=1-396"/>
</dbReference>
<dbReference type="PDB" id="1ASL">
    <property type="method" value="X-ray"/>
    <property type="resolution" value="2.60 A"/>
    <property type="chains" value="A/B=1-396"/>
</dbReference>
<dbReference type="PDB" id="1ASM">
    <property type="method" value="X-ray"/>
    <property type="resolution" value="2.35 A"/>
    <property type="chains" value="A/B=1-396"/>
</dbReference>
<dbReference type="PDB" id="1ASN">
    <property type="method" value="X-ray"/>
    <property type="resolution" value="2.50 A"/>
    <property type="chains" value="A/B=1-396"/>
</dbReference>
<dbReference type="PDB" id="1B4X">
    <property type="method" value="X-ray"/>
    <property type="resolution" value="2.45 A"/>
    <property type="chains" value="A=1-396"/>
</dbReference>
<dbReference type="PDB" id="1BQA">
    <property type="method" value="X-ray"/>
    <property type="resolution" value="2.10 A"/>
    <property type="chains" value="A/B=1-396"/>
</dbReference>
<dbReference type="PDB" id="1BQD">
    <property type="method" value="X-ray"/>
    <property type="resolution" value="2.10 A"/>
    <property type="chains" value="A/B=1-396"/>
</dbReference>
<dbReference type="PDB" id="1C9C">
    <property type="method" value="X-ray"/>
    <property type="resolution" value="2.40 A"/>
    <property type="chains" value="A=1-396"/>
</dbReference>
<dbReference type="PDB" id="1CQ6">
    <property type="method" value="X-ray"/>
    <property type="resolution" value="2.70 A"/>
    <property type="chains" value="A=1-396"/>
</dbReference>
<dbReference type="PDB" id="1CQ7">
    <property type="method" value="X-ray"/>
    <property type="resolution" value="2.40 A"/>
    <property type="chains" value="A=1-396"/>
</dbReference>
<dbReference type="PDB" id="1CQ8">
    <property type="method" value="X-ray"/>
    <property type="resolution" value="2.40 A"/>
    <property type="chains" value="A=1-396"/>
</dbReference>
<dbReference type="PDB" id="1CZC">
    <property type="method" value="X-ray"/>
    <property type="resolution" value="2.50 A"/>
    <property type="chains" value="A=1-396"/>
</dbReference>
<dbReference type="PDB" id="1CZE">
    <property type="method" value="X-ray"/>
    <property type="resolution" value="2.40 A"/>
    <property type="chains" value="A=1-396"/>
</dbReference>
<dbReference type="PDB" id="1G4V">
    <property type="method" value="X-ray"/>
    <property type="resolution" value="2.00 A"/>
    <property type="chains" value="A=1-396"/>
</dbReference>
<dbReference type="PDB" id="1G4X">
    <property type="method" value="X-ray"/>
    <property type="resolution" value="2.20 A"/>
    <property type="chains" value="A=1-396"/>
</dbReference>
<dbReference type="PDB" id="1G7W">
    <property type="method" value="X-ray"/>
    <property type="resolution" value="2.20 A"/>
    <property type="chains" value="A=1-396"/>
</dbReference>
<dbReference type="PDB" id="1G7X">
    <property type="method" value="X-ray"/>
    <property type="resolution" value="2.20 A"/>
    <property type="chains" value="A=1-396"/>
</dbReference>
<dbReference type="PDB" id="1IX6">
    <property type="method" value="X-ray"/>
    <property type="resolution" value="2.20 A"/>
    <property type="chains" value="A=1-396"/>
</dbReference>
<dbReference type="PDB" id="1IX7">
    <property type="method" value="X-ray"/>
    <property type="resolution" value="2.20 A"/>
    <property type="chains" value="A=1-396"/>
</dbReference>
<dbReference type="PDB" id="1IX8">
    <property type="method" value="X-ray"/>
    <property type="resolution" value="2.20 A"/>
    <property type="chains" value="A=1-396"/>
</dbReference>
<dbReference type="PDB" id="1QIR">
    <property type="method" value="X-ray"/>
    <property type="resolution" value="2.20 A"/>
    <property type="chains" value="A=1-396"/>
</dbReference>
<dbReference type="PDB" id="1QIS">
    <property type="method" value="X-ray"/>
    <property type="resolution" value="1.90 A"/>
    <property type="chains" value="A=1-396"/>
</dbReference>
<dbReference type="PDB" id="1QIT">
    <property type="method" value="X-ray"/>
    <property type="resolution" value="1.90 A"/>
    <property type="chains" value="A=1-396"/>
</dbReference>
<dbReference type="PDB" id="1SPA">
    <property type="method" value="X-ray"/>
    <property type="resolution" value="2.00 A"/>
    <property type="chains" value="A=1-396"/>
</dbReference>
<dbReference type="PDB" id="1TOE">
    <property type="method" value="X-ray"/>
    <property type="resolution" value="2.00 A"/>
    <property type="chains" value="A=1-396"/>
</dbReference>
<dbReference type="PDB" id="1TOG">
    <property type="method" value="X-ray"/>
    <property type="resolution" value="2.31 A"/>
    <property type="chains" value="A/B=1-396"/>
</dbReference>
<dbReference type="PDB" id="1TOI">
    <property type="method" value="X-ray"/>
    <property type="resolution" value="1.90 A"/>
    <property type="chains" value="A=1-396"/>
</dbReference>
<dbReference type="PDB" id="1TOJ">
    <property type="method" value="X-ray"/>
    <property type="resolution" value="1.90 A"/>
    <property type="chains" value="A=1-396"/>
</dbReference>
<dbReference type="PDB" id="1TOK">
    <property type="method" value="X-ray"/>
    <property type="resolution" value="1.85 A"/>
    <property type="chains" value="A/B=1-396"/>
</dbReference>
<dbReference type="PDB" id="1X28">
    <property type="method" value="X-ray"/>
    <property type="resolution" value="2.40 A"/>
    <property type="chains" value="A/B=1-396"/>
</dbReference>
<dbReference type="PDB" id="1X29">
    <property type="method" value="X-ray"/>
    <property type="resolution" value="2.20 A"/>
    <property type="chains" value="A/B=1-396"/>
</dbReference>
<dbReference type="PDB" id="1X2A">
    <property type="method" value="X-ray"/>
    <property type="resolution" value="2.20 A"/>
    <property type="chains" value="A/B=1-396"/>
</dbReference>
<dbReference type="PDB" id="1YOO">
    <property type="method" value="X-ray"/>
    <property type="resolution" value="2.40 A"/>
    <property type="chains" value="A=1-396"/>
</dbReference>
<dbReference type="PDB" id="2AAT">
    <property type="method" value="X-ray"/>
    <property type="resolution" value="2.80 A"/>
    <property type="chains" value="A=1-396"/>
</dbReference>
<dbReference type="PDB" id="2D5Y">
    <property type="method" value="X-ray"/>
    <property type="resolution" value="1.98 A"/>
    <property type="chains" value="A=1-396"/>
</dbReference>
<dbReference type="PDB" id="2D61">
    <property type="method" value="X-ray"/>
    <property type="resolution" value="2.01 A"/>
    <property type="chains" value="A=1-396"/>
</dbReference>
<dbReference type="PDB" id="2D63">
    <property type="method" value="X-ray"/>
    <property type="resolution" value="2.05 A"/>
    <property type="chains" value="A=1-396"/>
</dbReference>
<dbReference type="PDB" id="2D64">
    <property type="method" value="X-ray"/>
    <property type="resolution" value="2.05 A"/>
    <property type="chains" value="A=1-396"/>
</dbReference>
<dbReference type="PDB" id="2D65">
    <property type="method" value="X-ray"/>
    <property type="resolution" value="2.30 A"/>
    <property type="chains" value="A=1-396"/>
</dbReference>
<dbReference type="PDB" id="2D66">
    <property type="method" value="X-ray"/>
    <property type="resolution" value="2.18 A"/>
    <property type="chains" value="A=1-396"/>
</dbReference>
<dbReference type="PDB" id="2D7Y">
    <property type="method" value="X-ray"/>
    <property type="resolution" value="2.66 A"/>
    <property type="chains" value="A=1-396"/>
</dbReference>
<dbReference type="PDB" id="2D7Z">
    <property type="method" value="X-ray"/>
    <property type="resolution" value="2.65 A"/>
    <property type="chains" value="A=1-396"/>
</dbReference>
<dbReference type="PDB" id="2Q7W">
    <property type="method" value="X-ray"/>
    <property type="resolution" value="1.40 A"/>
    <property type="chains" value="A=1-396"/>
</dbReference>
<dbReference type="PDB" id="2QA3">
    <property type="method" value="X-ray"/>
    <property type="resolution" value="1.75 A"/>
    <property type="chains" value="A=1-396"/>
</dbReference>
<dbReference type="PDB" id="2QB2">
    <property type="method" value="X-ray"/>
    <property type="resolution" value="1.70 A"/>
    <property type="chains" value="A=1-396"/>
</dbReference>
<dbReference type="PDB" id="2QB3">
    <property type="method" value="X-ray"/>
    <property type="resolution" value="1.45 A"/>
    <property type="chains" value="A=1-396"/>
</dbReference>
<dbReference type="PDB" id="2QBT">
    <property type="method" value="X-ray"/>
    <property type="resolution" value="1.75 A"/>
    <property type="chains" value="A=1-396"/>
</dbReference>
<dbReference type="PDB" id="3AAT">
    <property type="method" value="X-ray"/>
    <property type="resolution" value="2.80 A"/>
    <property type="chains" value="A=1-396"/>
</dbReference>
<dbReference type="PDB" id="3QN6">
    <property type="method" value="X-ray"/>
    <property type="resolution" value="1.79 A"/>
    <property type="chains" value="A=1-396"/>
</dbReference>
<dbReference type="PDB" id="3QPG">
    <property type="method" value="X-ray"/>
    <property type="resolution" value="1.79 A"/>
    <property type="chains" value="A=1-396"/>
</dbReference>
<dbReference type="PDB" id="3ZZJ">
    <property type="method" value="X-ray"/>
    <property type="resolution" value="2.50 A"/>
    <property type="chains" value="A=1-396"/>
</dbReference>
<dbReference type="PDB" id="3ZZK">
    <property type="method" value="X-ray"/>
    <property type="resolution" value="1.78 A"/>
    <property type="chains" value="A=1-396"/>
</dbReference>
<dbReference type="PDB" id="4A00">
    <property type="method" value="X-ray"/>
    <property type="resolution" value="2.34 A"/>
    <property type="chains" value="A=1-396"/>
</dbReference>
<dbReference type="PDB" id="4DBC">
    <property type="method" value="X-ray"/>
    <property type="resolution" value="1.50 A"/>
    <property type="chains" value="A=1-396"/>
</dbReference>
<dbReference type="PDB" id="4F5F">
    <property type="method" value="X-ray"/>
    <property type="resolution" value="2.25 A"/>
    <property type="chains" value="A/B=2-396"/>
</dbReference>
<dbReference type="PDB" id="4F5G">
    <property type="method" value="X-ray"/>
    <property type="resolution" value="1.67 A"/>
    <property type="chains" value="A/B=2-396"/>
</dbReference>
<dbReference type="PDB" id="4F5H">
    <property type="method" value="X-ray"/>
    <property type="resolution" value="1.60 A"/>
    <property type="chains" value="A/B=2-396"/>
</dbReference>
<dbReference type="PDB" id="4F5I">
    <property type="method" value="X-ray"/>
    <property type="resolution" value="2.20 A"/>
    <property type="chains" value="A/B=2-396"/>
</dbReference>
<dbReference type="PDB" id="4F5J">
    <property type="method" value="X-ray"/>
    <property type="resolution" value="1.95 A"/>
    <property type="chains" value="A/B=2-396"/>
</dbReference>
<dbReference type="PDB" id="4F5K">
    <property type="method" value="X-ray"/>
    <property type="resolution" value="2.20 A"/>
    <property type="chains" value="A/B=2-396"/>
</dbReference>
<dbReference type="PDB" id="4F5L">
    <property type="method" value="X-ray"/>
    <property type="resolution" value="1.40 A"/>
    <property type="chains" value="A/B=2-396"/>
</dbReference>
<dbReference type="PDB" id="4F5M">
    <property type="method" value="X-ray"/>
    <property type="resolution" value="1.65 A"/>
    <property type="chains" value="A/B=2-396"/>
</dbReference>
<dbReference type="PDB" id="5EAA">
    <property type="method" value="X-ray"/>
    <property type="resolution" value="2.40 A"/>
    <property type="chains" value="A=1-396"/>
</dbReference>
<dbReference type="PDB" id="5T4L">
    <property type="method" value="X-ray"/>
    <property type="resolution" value="1.53 A"/>
    <property type="chains" value="A=1-396"/>
</dbReference>
<dbReference type="PDB" id="5VWQ">
    <property type="method" value="X-ray"/>
    <property type="resolution" value="1.80 A"/>
    <property type="chains" value="A/D/G/J=1-396"/>
</dbReference>
<dbReference type="PDB" id="5VWR">
    <property type="method" value="X-ray"/>
    <property type="resolution" value="1.72 A"/>
    <property type="chains" value="A=1-396"/>
</dbReference>
<dbReference type="PDB" id="8E9C">
    <property type="method" value="X-ray"/>
    <property type="resolution" value="2.18 A"/>
    <property type="chains" value="A/B=2-396"/>
</dbReference>
<dbReference type="PDB" id="8E9D">
    <property type="method" value="X-ray"/>
    <property type="resolution" value="1.37 A"/>
    <property type="chains" value="A/B=2-396"/>
</dbReference>
<dbReference type="PDB" id="8E9J">
    <property type="method" value="X-ray"/>
    <property type="resolution" value="2.09 A"/>
    <property type="chains" value="A/B=2-396"/>
</dbReference>
<dbReference type="PDB" id="8E9K">
    <property type="method" value="X-ray"/>
    <property type="resolution" value="1.83 A"/>
    <property type="chains" value="A/B=2-396"/>
</dbReference>
<dbReference type="PDB" id="8E9L">
    <property type="method" value="X-ray"/>
    <property type="resolution" value="2.31 A"/>
    <property type="chains" value="A/B=2-396"/>
</dbReference>
<dbReference type="PDB" id="8E9M">
    <property type="method" value="X-ray"/>
    <property type="resolution" value="1.76 A"/>
    <property type="chains" value="A/B=2-396"/>
</dbReference>
<dbReference type="PDB" id="8E9N">
    <property type="method" value="X-ray"/>
    <property type="resolution" value="1.88 A"/>
    <property type="chains" value="A/B=2-396"/>
</dbReference>
<dbReference type="PDB" id="8E9O">
    <property type="method" value="X-ray"/>
    <property type="resolution" value="1.96 A"/>
    <property type="chains" value="A/B=2-396"/>
</dbReference>
<dbReference type="PDB" id="8E9P">
    <property type="method" value="X-ray"/>
    <property type="resolution" value="2.08 A"/>
    <property type="chains" value="A/B=2-396"/>
</dbReference>
<dbReference type="PDB" id="8E9Q">
    <property type="method" value="X-ray"/>
    <property type="resolution" value="1.80 A"/>
    <property type="chains" value="A/B=2-396"/>
</dbReference>
<dbReference type="PDB" id="8E9R">
    <property type="method" value="X-ray"/>
    <property type="resolution" value="1.90 A"/>
    <property type="chains" value="A/B=2-396"/>
</dbReference>
<dbReference type="PDB" id="8E9S">
    <property type="method" value="X-ray"/>
    <property type="resolution" value="2.00 A"/>
    <property type="chains" value="A/B=2-396"/>
</dbReference>
<dbReference type="PDB" id="8E9T">
    <property type="method" value="X-ray"/>
    <property type="resolution" value="2.13 A"/>
    <property type="chains" value="A/B=2-396"/>
</dbReference>
<dbReference type="PDB" id="8E9U">
    <property type="method" value="X-ray"/>
    <property type="resolution" value="1.94 A"/>
    <property type="chains" value="A/B=2-396"/>
</dbReference>
<dbReference type="PDB" id="8E9V">
    <property type="method" value="X-ray"/>
    <property type="resolution" value="2.01 A"/>
    <property type="chains" value="A/B=2-396"/>
</dbReference>
<dbReference type="PDBsum" id="1AAM"/>
<dbReference type="PDBsum" id="1AAW"/>
<dbReference type="PDBsum" id="1AHE"/>
<dbReference type="PDBsum" id="1AHF"/>
<dbReference type="PDBsum" id="1AHG"/>
<dbReference type="PDBsum" id="1AHX"/>
<dbReference type="PDBsum" id="1AHY"/>
<dbReference type="PDBsum" id="1AIA"/>
<dbReference type="PDBsum" id="1AIB"/>
<dbReference type="PDBsum" id="1AIC"/>
<dbReference type="PDBsum" id="1AMQ"/>
<dbReference type="PDBsum" id="1AMR"/>
<dbReference type="PDBsum" id="1AMS"/>
<dbReference type="PDBsum" id="1ARG"/>
<dbReference type="PDBsum" id="1ARH"/>
<dbReference type="PDBsum" id="1ARI"/>
<dbReference type="PDBsum" id="1ARS"/>
<dbReference type="PDBsum" id="1ART"/>
<dbReference type="PDBsum" id="1ASA"/>
<dbReference type="PDBsum" id="1ASB"/>
<dbReference type="PDBsum" id="1ASC"/>
<dbReference type="PDBsum" id="1ASD"/>
<dbReference type="PDBsum" id="1ASE"/>
<dbReference type="PDBsum" id="1ASF"/>
<dbReference type="PDBsum" id="1ASG"/>
<dbReference type="PDBsum" id="1ASL"/>
<dbReference type="PDBsum" id="1ASM"/>
<dbReference type="PDBsum" id="1ASN"/>
<dbReference type="PDBsum" id="1B4X"/>
<dbReference type="PDBsum" id="1BQA"/>
<dbReference type="PDBsum" id="1BQD"/>
<dbReference type="PDBsum" id="1C9C"/>
<dbReference type="PDBsum" id="1CQ6"/>
<dbReference type="PDBsum" id="1CQ7"/>
<dbReference type="PDBsum" id="1CQ8"/>
<dbReference type="PDBsum" id="1CZC"/>
<dbReference type="PDBsum" id="1CZE"/>
<dbReference type="PDBsum" id="1G4V"/>
<dbReference type="PDBsum" id="1G4X"/>
<dbReference type="PDBsum" id="1G7W"/>
<dbReference type="PDBsum" id="1G7X"/>
<dbReference type="PDBsum" id="1IX6"/>
<dbReference type="PDBsum" id="1IX7"/>
<dbReference type="PDBsum" id="1IX8"/>
<dbReference type="PDBsum" id="1QIR"/>
<dbReference type="PDBsum" id="1QIS"/>
<dbReference type="PDBsum" id="1QIT"/>
<dbReference type="PDBsum" id="1SPA"/>
<dbReference type="PDBsum" id="1TOE"/>
<dbReference type="PDBsum" id="1TOG"/>
<dbReference type="PDBsum" id="1TOI"/>
<dbReference type="PDBsum" id="1TOJ"/>
<dbReference type="PDBsum" id="1TOK"/>
<dbReference type="PDBsum" id="1X28"/>
<dbReference type="PDBsum" id="1X29"/>
<dbReference type="PDBsum" id="1X2A"/>
<dbReference type="PDBsum" id="1YOO"/>
<dbReference type="PDBsum" id="2AAT"/>
<dbReference type="PDBsum" id="2D5Y"/>
<dbReference type="PDBsum" id="2D61"/>
<dbReference type="PDBsum" id="2D63"/>
<dbReference type="PDBsum" id="2D64"/>
<dbReference type="PDBsum" id="2D65"/>
<dbReference type="PDBsum" id="2D66"/>
<dbReference type="PDBsum" id="2D7Y"/>
<dbReference type="PDBsum" id="2D7Z"/>
<dbReference type="PDBsum" id="2Q7W"/>
<dbReference type="PDBsum" id="2QA3"/>
<dbReference type="PDBsum" id="2QB2"/>
<dbReference type="PDBsum" id="2QB3"/>
<dbReference type="PDBsum" id="2QBT"/>
<dbReference type="PDBsum" id="3AAT"/>
<dbReference type="PDBsum" id="3QN6"/>
<dbReference type="PDBsum" id="3QPG"/>
<dbReference type="PDBsum" id="3ZZJ"/>
<dbReference type="PDBsum" id="3ZZK"/>
<dbReference type="PDBsum" id="4A00"/>
<dbReference type="PDBsum" id="4DBC"/>
<dbReference type="PDBsum" id="4F5F"/>
<dbReference type="PDBsum" id="4F5G"/>
<dbReference type="PDBsum" id="4F5H"/>
<dbReference type="PDBsum" id="4F5I"/>
<dbReference type="PDBsum" id="4F5J"/>
<dbReference type="PDBsum" id="4F5K"/>
<dbReference type="PDBsum" id="4F5L"/>
<dbReference type="PDBsum" id="4F5M"/>
<dbReference type="PDBsum" id="5EAA"/>
<dbReference type="PDBsum" id="5T4L"/>
<dbReference type="PDBsum" id="5VWQ"/>
<dbReference type="PDBsum" id="5VWR"/>
<dbReference type="PDBsum" id="8E9C"/>
<dbReference type="PDBsum" id="8E9D"/>
<dbReference type="PDBsum" id="8E9J"/>
<dbReference type="PDBsum" id="8E9K"/>
<dbReference type="PDBsum" id="8E9L"/>
<dbReference type="PDBsum" id="8E9M"/>
<dbReference type="PDBsum" id="8E9N"/>
<dbReference type="PDBsum" id="8E9O"/>
<dbReference type="PDBsum" id="8E9P"/>
<dbReference type="PDBsum" id="8E9Q"/>
<dbReference type="PDBsum" id="8E9R"/>
<dbReference type="PDBsum" id="8E9S"/>
<dbReference type="PDBsum" id="8E9T"/>
<dbReference type="PDBsum" id="8E9U"/>
<dbReference type="PDBsum" id="8E9V"/>
<dbReference type="SMR" id="P00509"/>
<dbReference type="BioGRID" id="4260021">
    <property type="interactions" value="32"/>
</dbReference>
<dbReference type="BioGRID" id="849927">
    <property type="interactions" value="1"/>
</dbReference>
<dbReference type="DIP" id="DIP-9181N"/>
<dbReference type="FunCoup" id="P00509">
    <property type="interactions" value="652"/>
</dbReference>
<dbReference type="IntAct" id="P00509">
    <property type="interactions" value="4"/>
</dbReference>
<dbReference type="STRING" id="511145.b0928"/>
<dbReference type="DrugBank" id="DB02024">
    <property type="generic name" value="3-phenylpropionic acid"/>
</dbReference>
<dbReference type="DrugBank" id="DB03553">
    <property type="generic name" value="Glutaric Acid"/>
</dbReference>
<dbReference type="DrugBank" id="DB02758">
    <property type="generic name" value="Indolepropionic acid"/>
</dbReference>
<dbReference type="DrugBank" id="DB03750">
    <property type="generic name" value="Isovaleric Acid"/>
</dbReference>
<dbReference type="DrugBank" id="DB04299">
    <property type="generic name" value="Maleic acid"/>
</dbReference>
<dbReference type="DrugBank" id="DB04083">
    <property type="generic name" value="N(6)-(pyridoxal phosphate)-L-lysine"/>
</dbReference>
<dbReference type="DrugBank" id="DB04467">
    <property type="generic name" value="N-(5'-phosphopyridoxyl)-L-alanine"/>
</dbReference>
<dbReference type="DrugBank" id="DB01639">
    <property type="generic name" value="N-Methyl-Pyridoxal-5'-Phosphate"/>
</dbReference>
<dbReference type="DrugBank" id="DB04765">
    <property type="generic name" value="N-PYRIDOXYL-2-METHYL-L-GLUTAMIC ACID-5'-MONOPHOSPHATE"/>
</dbReference>
<dbReference type="DrugBank" id="DB04762">
    <property type="generic name" value="N-PYRIDOXYL-D-GLUTAMIC ACID-5'-MONOPHOSPHATE"/>
</dbReference>
<dbReference type="DrugBank" id="DB08845">
    <property type="generic name" value="Oxogluric acid"/>
</dbReference>
<dbReference type="DrugBank" id="DB03629">
    <property type="generic name" value="Pyridoxal-5'-Phosphate-N-Oxide"/>
</dbReference>
<dbReference type="DrugBank" id="DB02981">
    <property type="generic name" value="Vitamin B6 Complexed with 2-Amino-Hexanoic Acid"/>
</dbReference>
<dbReference type="DrugBank" id="DB03662">
    <property type="generic name" value="Vitamin B6 Complexed with 2-Amino-Pentanoic Acid"/>
</dbReference>
<dbReference type="jPOST" id="P00509"/>
<dbReference type="PaxDb" id="511145-b0928"/>
<dbReference type="EnsemblBacteria" id="AAC74014">
    <property type="protein sequence ID" value="AAC74014"/>
    <property type="gene ID" value="b0928"/>
</dbReference>
<dbReference type="GeneID" id="93776486"/>
<dbReference type="GeneID" id="945553"/>
<dbReference type="KEGG" id="ecj:JW0911"/>
<dbReference type="KEGG" id="eco:b0928"/>
<dbReference type="KEGG" id="ecoc:C3026_05700"/>
<dbReference type="PATRIC" id="fig|1411691.4.peg.1348"/>
<dbReference type="EchoBASE" id="EB0094"/>
<dbReference type="eggNOG" id="COG1448">
    <property type="taxonomic scope" value="Bacteria"/>
</dbReference>
<dbReference type="HOGENOM" id="CLU_032440_1_2_6"/>
<dbReference type="InParanoid" id="P00509"/>
<dbReference type="OMA" id="VGACTIV"/>
<dbReference type="OrthoDB" id="9766445at2"/>
<dbReference type="PhylomeDB" id="P00509"/>
<dbReference type="BioCyc" id="EcoCyc:ASPAMINOTRANS-MONOMER"/>
<dbReference type="BioCyc" id="MetaCyc:ASPAMINOTRANS-MONOMER"/>
<dbReference type="BRENDA" id="2.6.1.1">
    <property type="organism ID" value="2026"/>
</dbReference>
<dbReference type="SABIO-RK" id="P00509"/>
<dbReference type="EvolutionaryTrace" id="P00509"/>
<dbReference type="PRO" id="PR:P00509"/>
<dbReference type="Proteomes" id="UP000000625">
    <property type="component" value="Chromosome"/>
</dbReference>
<dbReference type="GO" id="GO:0005737">
    <property type="term" value="C:cytoplasm"/>
    <property type="evidence" value="ECO:0000314"/>
    <property type="project" value="EcoliWiki"/>
</dbReference>
<dbReference type="GO" id="GO:0005829">
    <property type="term" value="C:cytosol"/>
    <property type="evidence" value="ECO:0007005"/>
    <property type="project" value="UniProtKB"/>
</dbReference>
<dbReference type="GO" id="GO:0042802">
    <property type="term" value="F:identical protein binding"/>
    <property type="evidence" value="ECO:0000353"/>
    <property type="project" value="IntAct"/>
</dbReference>
<dbReference type="GO" id="GO:0004069">
    <property type="term" value="F:L-aspartate:2-oxoglutarate aminotransferase activity"/>
    <property type="evidence" value="ECO:0000315"/>
    <property type="project" value="EcoliWiki"/>
</dbReference>
<dbReference type="GO" id="GO:0004838">
    <property type="term" value="F:L-tyrosine-2-oxoglutarate transaminase activity"/>
    <property type="evidence" value="ECO:0000315"/>
    <property type="project" value="EcoliWiki"/>
</dbReference>
<dbReference type="GO" id="GO:0042803">
    <property type="term" value="F:protein homodimerization activity"/>
    <property type="evidence" value="ECO:0000314"/>
    <property type="project" value="EcoCyc"/>
</dbReference>
<dbReference type="GO" id="GO:0030170">
    <property type="term" value="F:pyridoxal phosphate binding"/>
    <property type="evidence" value="ECO:0000314"/>
    <property type="project" value="EcoliWiki"/>
</dbReference>
<dbReference type="GO" id="GO:0009094">
    <property type="term" value="P:L-phenylalanine biosynthetic process"/>
    <property type="evidence" value="ECO:0000316"/>
    <property type="project" value="EcoliWiki"/>
</dbReference>
<dbReference type="GO" id="GO:0033585">
    <property type="term" value="P:L-phenylalanine biosynthetic process from chorismate via phenylpyruvate"/>
    <property type="evidence" value="ECO:0000315"/>
    <property type="project" value="EcoCyc"/>
</dbReference>
<dbReference type="CDD" id="cd00609">
    <property type="entry name" value="AAT_like"/>
    <property type="match status" value="1"/>
</dbReference>
<dbReference type="FunFam" id="3.40.640.10:FF:000015">
    <property type="entry name" value="Aspartate aminotransferase"/>
    <property type="match status" value="1"/>
</dbReference>
<dbReference type="FunFam" id="3.90.1150.10:FF:000001">
    <property type="entry name" value="Aspartate aminotransferase"/>
    <property type="match status" value="1"/>
</dbReference>
<dbReference type="Gene3D" id="3.90.1150.10">
    <property type="entry name" value="Aspartate Aminotransferase, domain 1"/>
    <property type="match status" value="1"/>
</dbReference>
<dbReference type="Gene3D" id="3.40.640.10">
    <property type="entry name" value="Type I PLP-dependent aspartate aminotransferase-like (Major domain)"/>
    <property type="match status" value="1"/>
</dbReference>
<dbReference type="InterPro" id="IPR004839">
    <property type="entry name" value="Aminotransferase_I/II_large"/>
</dbReference>
<dbReference type="InterPro" id="IPR000796">
    <property type="entry name" value="Asp_trans"/>
</dbReference>
<dbReference type="InterPro" id="IPR004838">
    <property type="entry name" value="NHTrfase_class1_PyrdxlP-BS"/>
</dbReference>
<dbReference type="InterPro" id="IPR015424">
    <property type="entry name" value="PyrdxlP-dep_Trfase"/>
</dbReference>
<dbReference type="InterPro" id="IPR015421">
    <property type="entry name" value="PyrdxlP-dep_Trfase_major"/>
</dbReference>
<dbReference type="InterPro" id="IPR015422">
    <property type="entry name" value="PyrdxlP-dep_Trfase_small"/>
</dbReference>
<dbReference type="NCBIfam" id="NF006719">
    <property type="entry name" value="PRK09257.1"/>
    <property type="match status" value="1"/>
</dbReference>
<dbReference type="PANTHER" id="PTHR11879">
    <property type="entry name" value="ASPARTATE AMINOTRANSFERASE"/>
    <property type="match status" value="1"/>
</dbReference>
<dbReference type="PANTHER" id="PTHR11879:SF22">
    <property type="entry name" value="ASPARTATE AMINOTRANSFERASE, MITOCHONDRIAL"/>
    <property type="match status" value="1"/>
</dbReference>
<dbReference type="Pfam" id="PF00155">
    <property type="entry name" value="Aminotran_1_2"/>
    <property type="match status" value="1"/>
</dbReference>
<dbReference type="PRINTS" id="PR00799">
    <property type="entry name" value="TRANSAMINASE"/>
</dbReference>
<dbReference type="SUPFAM" id="SSF53383">
    <property type="entry name" value="PLP-dependent transferases"/>
    <property type="match status" value="1"/>
</dbReference>
<dbReference type="PROSITE" id="PS00105">
    <property type="entry name" value="AA_TRANSFER_CLASS_1"/>
    <property type="match status" value="1"/>
</dbReference>
<organism>
    <name type="scientific">Escherichia coli (strain K12)</name>
    <dbReference type="NCBI Taxonomy" id="83333"/>
    <lineage>
        <taxon>Bacteria</taxon>
        <taxon>Pseudomonadati</taxon>
        <taxon>Pseudomonadota</taxon>
        <taxon>Gammaproteobacteria</taxon>
        <taxon>Enterobacterales</taxon>
        <taxon>Enterobacteriaceae</taxon>
        <taxon>Escherichia</taxon>
    </lineage>
</organism>
<evidence type="ECO:0000269" key="1">
    <source>
    </source>
</evidence>
<evidence type="ECO:0000269" key="2">
    <source>
    </source>
</evidence>
<evidence type="ECO:0000269" key="3">
    <source>
    </source>
</evidence>
<evidence type="ECO:0000269" key="4">
    <source>
    </source>
</evidence>
<evidence type="ECO:0000269" key="5">
    <source>
    </source>
</evidence>
<evidence type="ECO:0000269" key="6">
    <source>
    </source>
</evidence>
<evidence type="ECO:0000269" key="7">
    <source>
    </source>
</evidence>
<evidence type="ECO:0000269" key="8">
    <source>
    </source>
</evidence>
<evidence type="ECO:0000269" key="9">
    <source>
    </source>
</evidence>
<evidence type="ECO:0000305" key="10"/>
<evidence type="ECO:0007744" key="11">
    <source>
        <dbReference type="PDB" id="1AAW"/>
    </source>
</evidence>
<evidence type="ECO:0007744" key="12">
    <source>
        <dbReference type="PDB" id="1AHE"/>
    </source>
</evidence>
<evidence type="ECO:0007744" key="13">
    <source>
        <dbReference type="PDB" id="1AHF"/>
    </source>
</evidence>
<evidence type="ECO:0007744" key="14">
    <source>
        <dbReference type="PDB" id="1AHG"/>
    </source>
</evidence>
<evidence type="ECO:0007744" key="15">
    <source>
        <dbReference type="PDB" id="1AHX"/>
    </source>
</evidence>
<evidence type="ECO:0007744" key="16">
    <source>
        <dbReference type="PDB" id="1AHY"/>
    </source>
</evidence>
<evidence type="ECO:0007744" key="17">
    <source>
        <dbReference type="PDB" id="1AIB"/>
    </source>
</evidence>
<evidence type="ECO:0007744" key="18">
    <source>
        <dbReference type="PDB" id="1ARG"/>
    </source>
</evidence>
<evidence type="ECO:0007744" key="19">
    <source>
        <dbReference type="PDB" id="1ARI"/>
    </source>
</evidence>
<evidence type="ECO:0007744" key="20">
    <source>
        <dbReference type="PDB" id="1ARS"/>
    </source>
</evidence>
<evidence type="ECO:0007744" key="21">
    <source>
        <dbReference type="PDB" id="1ART"/>
    </source>
</evidence>
<evidence type="ECO:0007744" key="22">
    <source>
        <dbReference type="PDB" id="1ASA"/>
    </source>
</evidence>
<evidence type="ECO:0007744" key="23">
    <source>
        <dbReference type="PDB" id="1ASB"/>
    </source>
</evidence>
<evidence type="ECO:0007744" key="24">
    <source>
        <dbReference type="PDB" id="1ASC"/>
    </source>
</evidence>
<evidence type="ECO:0007744" key="25">
    <source>
        <dbReference type="PDB" id="1ASD"/>
    </source>
</evidence>
<evidence type="ECO:0007744" key="26">
    <source>
        <dbReference type="PDB" id="1ASE"/>
    </source>
</evidence>
<evidence type="ECO:0007744" key="27">
    <source>
        <dbReference type="PDB" id="1ASF"/>
    </source>
</evidence>
<evidence type="ECO:0007744" key="28">
    <source>
        <dbReference type="PDB" id="1ASG"/>
    </source>
</evidence>
<evidence type="ECO:0007744" key="29">
    <source>
        <dbReference type="PDB" id="1ASM"/>
    </source>
</evidence>
<evidence type="ECO:0007744" key="30">
    <source>
        <dbReference type="PDB" id="1ASN"/>
    </source>
</evidence>
<evidence type="ECO:0007744" key="31">
    <source>
        <dbReference type="PDB" id="1B4X"/>
    </source>
</evidence>
<evidence type="ECO:0007744" key="32">
    <source>
        <dbReference type="PDB" id="1CZC"/>
    </source>
</evidence>
<evidence type="ECO:0007744" key="33">
    <source>
        <dbReference type="PDB" id="1CZE"/>
    </source>
</evidence>
<evidence type="ECO:0007744" key="34">
    <source>
        <dbReference type="PDB" id="1G4V"/>
    </source>
</evidence>
<evidence type="ECO:0007744" key="35">
    <source>
        <dbReference type="PDB" id="1G4X"/>
    </source>
</evidence>
<evidence type="ECO:0007744" key="36">
    <source>
        <dbReference type="PDB" id="1G7W"/>
    </source>
</evidence>
<evidence type="ECO:0007744" key="37">
    <source>
        <dbReference type="PDB" id="1G7X"/>
    </source>
</evidence>
<evidence type="ECO:0007744" key="38">
    <source>
        <dbReference type="PDB" id="1IX6"/>
    </source>
</evidence>
<evidence type="ECO:0007744" key="39">
    <source>
        <dbReference type="PDB" id="1IX7"/>
    </source>
</evidence>
<evidence type="ECO:0007744" key="40">
    <source>
        <dbReference type="PDB" id="1IX8"/>
    </source>
</evidence>
<evidence type="ECO:0007744" key="41">
    <source>
        <dbReference type="PDB" id="1QIR"/>
    </source>
</evidence>
<evidence type="ECO:0007744" key="42">
    <source>
        <dbReference type="PDB" id="1QIS"/>
    </source>
</evidence>
<evidence type="ECO:0007744" key="43">
    <source>
        <dbReference type="PDB" id="1QIT"/>
    </source>
</evidence>
<evidence type="ECO:0007744" key="44">
    <source>
        <dbReference type="PDB" id="1SPA"/>
    </source>
</evidence>
<evidence type="ECO:0007744" key="45">
    <source>
        <dbReference type="PDB" id="1YOO"/>
    </source>
</evidence>
<evidence type="ECO:0007744" key="46">
    <source>
        <dbReference type="PDB" id="2D5Y"/>
    </source>
</evidence>
<evidence type="ECO:0007744" key="47">
    <source>
        <dbReference type="PDB" id="2D61"/>
    </source>
</evidence>
<evidence type="ECO:0007744" key="48">
    <source>
        <dbReference type="PDB" id="2D63"/>
    </source>
</evidence>
<evidence type="ECO:0007744" key="49">
    <source>
        <dbReference type="PDB" id="2D7Y"/>
    </source>
</evidence>
<evidence type="ECO:0007744" key="50">
    <source>
        <dbReference type="PDB" id="3AAT"/>
    </source>
</evidence>
<evidence type="ECO:0007744" key="51">
    <source>
        <dbReference type="PDB" id="3QPG"/>
    </source>
</evidence>
<evidence type="ECO:0007744" key="52">
    <source>
        <dbReference type="PDB" id="3ZZJ"/>
    </source>
</evidence>
<evidence type="ECO:0007744" key="53">
    <source>
        <dbReference type="PDB" id="4DBC"/>
    </source>
</evidence>
<evidence type="ECO:0007744" key="54">
    <source>
        <dbReference type="PDB" id="5EAA"/>
    </source>
</evidence>
<evidence type="ECO:0007829" key="55">
    <source>
        <dbReference type="PDB" id="1ASE"/>
    </source>
</evidence>
<evidence type="ECO:0007829" key="56">
    <source>
        <dbReference type="PDB" id="1TOG"/>
    </source>
</evidence>
<evidence type="ECO:0007829" key="57">
    <source>
        <dbReference type="PDB" id="2Q7W"/>
    </source>
</evidence>
<evidence type="ECO:0007829" key="58">
    <source>
        <dbReference type="PDB" id="4A00"/>
    </source>
</evidence>
<evidence type="ECO:0007829" key="59">
    <source>
        <dbReference type="PDB" id="8E9D"/>
    </source>
</evidence>
<proteinExistence type="evidence at protein level"/>
<name>AAT_ECOLI</name>
<comment type="catalytic activity">
    <reaction evidence="1">
        <text>L-aspartate + 2-oxoglutarate = oxaloacetate + L-glutamate</text>
        <dbReference type="Rhea" id="RHEA:21824"/>
        <dbReference type="ChEBI" id="CHEBI:16452"/>
        <dbReference type="ChEBI" id="CHEBI:16810"/>
        <dbReference type="ChEBI" id="CHEBI:29985"/>
        <dbReference type="ChEBI" id="CHEBI:29991"/>
        <dbReference type="EC" id="2.6.1.1"/>
    </reaction>
</comment>
<comment type="cofactor">
    <cofactor evidence="2">
        <name>pyridoxal 5'-phosphate</name>
        <dbReference type="ChEBI" id="CHEBI:597326"/>
    </cofactor>
</comment>
<comment type="subunit">
    <text evidence="3">Homodimer.</text>
</comment>
<comment type="interaction">
    <interactant intactId="EBI-907474">
        <id>P00509</id>
    </interactant>
    <interactant intactId="EBI-907474">
        <id>P00509</id>
        <label>aspC</label>
    </interactant>
    <organismsDiffer>false</organismsDiffer>
    <experiments>4</experiments>
</comment>
<comment type="subcellular location">
    <subcellularLocation>
        <location>Cytoplasm</location>
    </subcellularLocation>
</comment>
<comment type="induction">
    <text evidence="7">Transcription is increased specifically in response to 2,4,6-trinitrotoluene (TNT) and its indicator compounds 1,3-DNB, 2,4-DNT, and 2,6-DNT.</text>
</comment>
<comment type="biotechnology">
    <text evidence="7">Has been used to construct a 2,4,6-trinitrotoluene (TNT) biosensor strain.</text>
</comment>
<comment type="similarity">
    <text evidence="10">Belongs to the class-I pyridoxal-phosphate-dependent aminotransferase family.</text>
</comment>
<gene>
    <name type="primary">aspC</name>
    <name type="ordered locus">b0928</name>
    <name type="ordered locus">JW0911</name>
</gene>
<feature type="chain" id="PRO_0000123838" description="Aspartate aminotransferase">
    <location>
        <begin position="1"/>
        <end position="396"/>
    </location>
</feature>
<feature type="binding site" evidence="21 33 51 53">
    <location>
        <position position="34"/>
    </location>
    <ligand>
        <name>L-aspartate</name>
        <dbReference type="ChEBI" id="CHEBI:29991"/>
    </ligand>
</feature>
<feature type="binding site" evidence="17 21 33 44 51 53">
    <location>
        <position position="130"/>
    </location>
    <ligand>
        <name>L-aspartate</name>
        <dbReference type="ChEBI" id="CHEBI:29991"/>
    </ligand>
</feature>
<feature type="binding site" evidence="17 21 24 33 44 51 53">
    <location>
        <position position="183"/>
    </location>
    <ligand>
        <name>L-aspartate</name>
        <dbReference type="ChEBI" id="CHEBI:29991"/>
    </ligand>
</feature>
<feature type="binding site" evidence="14 17 18 21 33 51 53">
    <location>
        <position position="374"/>
    </location>
    <ligand>
        <name>L-aspartate</name>
        <dbReference type="ChEBI" id="CHEBI:29991"/>
    </ligand>
</feature>
<feature type="modified residue" description="N6-(pyridoxal phosphate)lysine" evidence="2 5 8 9 11 12 13 15 16 19 20 22 23 25 26 27 28 29 30 31 32 33 34 35 36 37 38 39 40 41 42 43 45 46 47 48 49 50 52 54">
    <location>
        <position position="246"/>
    </location>
</feature>
<feature type="mutagenesis site" description="Slight changes in activity." evidence="4">
    <original>Y</original>
    <variation>F</variation>
    <variation>S</variation>
    <location>
        <position position="65"/>
    </location>
</feature>
<feature type="mutagenesis site" description="Slight increase in maximum velocity of the overall transamination reaction between aspartate and 2-oxoglutarate." evidence="6">
    <original>H</original>
    <variation>A</variation>
    <location>
        <position position="133"/>
    </location>
</feature>
<feature type="mutagenesis site" description="Decreases to 60% in maximum rate of the overall reactions in both directions." evidence="6">
    <original>H</original>
    <variation>N</variation>
    <location>
        <position position="133"/>
    </location>
</feature>
<feature type="mutagenesis site" description="Reduces first-order rate constant over 25000-fold." evidence="1">
    <original>R</original>
    <variation>V</variation>
    <location>
        <position position="280"/>
    </location>
</feature>
<feature type="mutagenesis site" description="Reduces first-order rate constant about 10000-fold." evidence="1 5">
    <original>R</original>
    <variation>A</variation>
    <location>
        <position position="374"/>
    </location>
</feature>
<feature type="mutagenesis site" description="Second-order rate constants are reduced by &gt;5 orders of magnitude." evidence="1 5">
    <original>R</original>
    <variation>F</variation>
    <variation>Y</variation>
    <location>
        <position position="374"/>
    </location>
</feature>
<feature type="turn" evidence="59">
    <location>
        <begin position="2"/>
        <end position="4"/>
    </location>
</feature>
<feature type="turn" evidence="59">
    <location>
        <begin position="12"/>
        <end position="15"/>
    </location>
</feature>
<feature type="helix" evidence="59">
    <location>
        <begin position="16"/>
        <end position="22"/>
    </location>
</feature>
<feature type="strand" evidence="57">
    <location>
        <begin position="29"/>
        <end position="32"/>
    </location>
</feature>
<feature type="strand" evidence="58">
    <location>
        <begin position="33"/>
        <end position="35"/>
    </location>
</feature>
<feature type="turn" evidence="55">
    <location>
        <begin position="39"/>
        <end position="41"/>
    </location>
</feature>
<feature type="helix" evidence="59">
    <location>
        <begin position="47"/>
        <end position="59"/>
    </location>
</feature>
<feature type="helix" evidence="59">
    <location>
        <begin position="72"/>
        <end position="83"/>
    </location>
</feature>
<feature type="helix" evidence="59">
    <location>
        <begin position="88"/>
        <end position="91"/>
    </location>
</feature>
<feature type="strand" evidence="59">
    <location>
        <begin position="95"/>
        <end position="101"/>
    </location>
</feature>
<feature type="helix" evidence="59">
    <location>
        <begin position="102"/>
        <end position="117"/>
    </location>
</feature>
<feature type="strand" evidence="59">
    <location>
        <begin position="122"/>
        <end position="128"/>
    </location>
</feature>
<feature type="helix" evidence="59">
    <location>
        <begin position="132"/>
        <end position="139"/>
    </location>
</feature>
<feature type="strand" evidence="59">
    <location>
        <begin position="143"/>
        <end position="148"/>
    </location>
</feature>
<feature type="turn" evidence="59">
    <location>
        <begin position="152"/>
        <end position="155"/>
    </location>
</feature>
<feature type="helix" evidence="59">
    <location>
        <begin position="159"/>
        <end position="165"/>
    </location>
</feature>
<feature type="turn" evidence="59">
    <location>
        <begin position="166"/>
        <end position="168"/>
    </location>
</feature>
<feature type="strand" evidence="59">
    <location>
        <begin position="174"/>
        <end position="181"/>
    </location>
</feature>
<feature type="turn" evidence="59">
    <location>
        <begin position="183"/>
        <end position="185"/>
    </location>
</feature>
<feature type="helix" evidence="59">
    <location>
        <begin position="191"/>
        <end position="204"/>
    </location>
</feature>
<feature type="strand" evidence="59">
    <location>
        <begin position="207"/>
        <end position="213"/>
    </location>
</feature>
<feature type="strand" evidence="59">
    <location>
        <begin position="217"/>
        <end position="219"/>
    </location>
</feature>
<feature type="helix" evidence="59">
    <location>
        <begin position="221"/>
        <end position="224"/>
    </location>
</feature>
<feature type="helix" evidence="59">
    <location>
        <begin position="226"/>
        <end position="234"/>
    </location>
</feature>
<feature type="strand" evidence="59">
    <location>
        <begin position="238"/>
        <end position="243"/>
    </location>
</feature>
<feature type="turn" evidence="59">
    <location>
        <begin position="245"/>
        <end position="247"/>
    </location>
</feature>
<feature type="helix" evidence="59">
    <location>
        <begin position="251"/>
        <end position="253"/>
    </location>
</feature>
<feature type="strand" evidence="59">
    <location>
        <begin position="256"/>
        <end position="261"/>
    </location>
</feature>
<feature type="helix" evidence="59">
    <location>
        <begin position="265"/>
        <end position="280"/>
    </location>
</feature>
<feature type="turn" evidence="59">
    <location>
        <begin position="281"/>
        <end position="283"/>
    </location>
</feature>
<feature type="helix" evidence="59">
    <location>
        <begin position="288"/>
        <end position="298"/>
    </location>
</feature>
<feature type="helix" evidence="59">
    <location>
        <begin position="301"/>
        <end position="331"/>
    </location>
</feature>
<feature type="helix" evidence="59">
    <location>
        <begin position="339"/>
        <end position="343"/>
    </location>
</feature>
<feature type="strand" evidence="59">
    <location>
        <begin position="346"/>
        <end position="350"/>
    </location>
</feature>
<feature type="helix" evidence="59">
    <location>
        <begin position="355"/>
        <end position="365"/>
    </location>
</feature>
<feature type="strand" evidence="56">
    <location>
        <begin position="367"/>
        <end position="369"/>
    </location>
</feature>
<feature type="strand" evidence="59">
    <location>
        <begin position="373"/>
        <end position="376"/>
    </location>
</feature>
<feature type="helix" evidence="59">
    <location>
        <begin position="377"/>
        <end position="379"/>
    </location>
</feature>
<feature type="turn" evidence="59">
    <location>
        <begin position="382"/>
        <end position="384"/>
    </location>
</feature>
<feature type="helix" evidence="59">
    <location>
        <begin position="385"/>
        <end position="395"/>
    </location>
</feature>
<sequence length="396" mass="43573">MFENITAAPADPILGLADLFRADERPGKINLGIGVYKDETGKTPVLTSVKKAEQYLLENETTKNYLGIDGIPEFGRCTQELLFGKGSALINDKRARTAQTPGGTGALRVAADFLAKNTSVKRVWVSNPSWPNHKSVFNSAGLEVREYAYYDAENHTLDFDALINSLNEAQAGDVVLFHGCCHNPTGIDPTLEQWQTLAQLSVEKGWLPLFDFAYQGFARGLEEDAEGLRAFAAMHKELIVASSYSKNFGLYNERVGACTLVAADSETVDRAFSQMKAAIRANYSNPPAHGASVVATILSNDALRAIWEQELTDMRQRIQRMRQLFVNTLQEKGANRDFSFIIKQNGMFSFSGLTKEQVLRLREEFGVYAVASGRVNVAGMTPDNMAPLCEAIVAVL</sequence>
<protein>
    <recommendedName>
        <fullName>Aspartate aminotransferase</fullName>
        <shortName>AspAT</shortName>
        <ecNumber evidence="1">2.6.1.1</ecNumber>
    </recommendedName>
    <alternativeName>
        <fullName>Transaminase A</fullName>
    </alternativeName>
</protein>
<keyword id="KW-0002">3D-structure</keyword>
<keyword id="KW-0032">Aminotransferase</keyword>
<keyword id="KW-0963">Cytoplasm</keyword>
<keyword id="KW-0903">Direct protein sequencing</keyword>
<keyword id="KW-0663">Pyridoxal phosphate</keyword>
<keyword id="KW-1185">Reference proteome</keyword>
<keyword id="KW-0808">Transferase</keyword>
<reference key="1">
    <citation type="journal article" date="1984" name="Biochem. Biophys. Res. Commun.">
        <title>The complete amino acid sequence of aspartate aminotransferase from Escherichia coli: sequence comparison with pig isoenzymes.</title>
        <authorList>
            <person name="Kondo K."/>
            <person name="Wakabayashi S."/>
            <person name="Yagi T."/>
            <person name="Kagamiyama H."/>
        </authorList>
    </citation>
    <scope>PROTEIN SEQUENCE</scope>
</reference>
<reference key="2">
    <citation type="journal article" date="1985" name="J. Biochem.">
        <title>Aspartate aminotransferase of Escherichia coli: nucleotide sequence of the aspC gene.</title>
        <authorList>
            <person name="Kuramitsu S."/>
            <person name="Okuno S."/>
            <person name="Ogawa T."/>
            <person name="Ogawa H."/>
            <person name="Kagamiyama H."/>
        </authorList>
    </citation>
    <scope>NUCLEOTIDE SEQUENCE [GENOMIC DNA]</scope>
</reference>
<reference key="3">
    <citation type="journal article" date="1986" name="Biochem. J.">
        <title>The cloning and sequence analysis of the aspC and tyrB genes from Escherichia coli K12. Comparison of the primary structures of the aspartate aminotransferase and aromatic aminotransferase of E. coli with those of the pig aspartate aminotransferase isoenzymes.</title>
        <authorList>
            <person name="Fotheringham I.G."/>
            <person name="Dacey S.A."/>
            <person name="Taylor P.P."/>
            <person name="Smith T.J."/>
            <person name="Hunter M.G."/>
            <person name="Finlay M.E."/>
            <person name="Primrose S.B."/>
            <person name="Parker D.M."/>
            <person name="Edwards R.M."/>
        </authorList>
    </citation>
    <scope>NUCLEOTIDE SEQUENCE [GENOMIC DNA]</scope>
</reference>
<reference key="4">
    <citation type="journal article" date="1987" name="J. Biol. Chem.">
        <title>Structural studies on aspartate aminotransferase from Escherichia coli. Covalent structure.</title>
        <authorList>
            <person name="Kondo K."/>
            <person name="Wakabayashi S."/>
            <person name="Kagamiyama H."/>
        </authorList>
    </citation>
    <scope>PROTEIN SEQUENCE</scope>
</reference>
<reference key="5">
    <citation type="journal article" date="1996" name="DNA Res.">
        <title>A 718-kb DNA sequence of the Escherichia coli K-12 genome corresponding to the 12.7-28.0 min region on the linkage map.</title>
        <authorList>
            <person name="Oshima T."/>
            <person name="Aiba H."/>
            <person name="Baba T."/>
            <person name="Fujita K."/>
            <person name="Hayashi K."/>
            <person name="Honjo A."/>
            <person name="Ikemoto K."/>
            <person name="Inada T."/>
            <person name="Itoh T."/>
            <person name="Kajihara M."/>
            <person name="Kanai K."/>
            <person name="Kashimoto K."/>
            <person name="Kimura S."/>
            <person name="Kitagawa M."/>
            <person name="Makino K."/>
            <person name="Masuda S."/>
            <person name="Miki T."/>
            <person name="Mizobuchi K."/>
            <person name="Mori H."/>
            <person name="Motomura K."/>
            <person name="Nakamura Y."/>
            <person name="Nashimoto H."/>
            <person name="Nishio Y."/>
            <person name="Saito N."/>
            <person name="Sampei G."/>
            <person name="Seki Y."/>
            <person name="Tagami H."/>
            <person name="Takemoto K."/>
            <person name="Wada C."/>
            <person name="Yamamoto Y."/>
            <person name="Yano M."/>
            <person name="Horiuchi T."/>
        </authorList>
    </citation>
    <scope>NUCLEOTIDE SEQUENCE [LARGE SCALE GENOMIC DNA]</scope>
    <source>
        <strain>K12 / W3110 / ATCC 27325 / DSM 5911</strain>
    </source>
</reference>
<reference key="6">
    <citation type="journal article" date="1997" name="Science">
        <title>The complete genome sequence of Escherichia coli K-12.</title>
        <authorList>
            <person name="Blattner F.R."/>
            <person name="Plunkett G. III"/>
            <person name="Bloch C.A."/>
            <person name="Perna N.T."/>
            <person name="Burland V."/>
            <person name="Riley M."/>
            <person name="Collado-Vides J."/>
            <person name="Glasner J.D."/>
            <person name="Rode C.K."/>
            <person name="Mayhew G.F."/>
            <person name="Gregor J."/>
            <person name="Davis N.W."/>
            <person name="Kirkpatrick H.A."/>
            <person name="Goeden M.A."/>
            <person name="Rose D.J."/>
            <person name="Mau B."/>
            <person name="Shao Y."/>
        </authorList>
    </citation>
    <scope>NUCLEOTIDE SEQUENCE [LARGE SCALE GENOMIC DNA]</scope>
    <source>
        <strain>K12 / MG1655 / ATCC 47076</strain>
    </source>
</reference>
<reference key="7">
    <citation type="journal article" date="2006" name="Mol. Syst. Biol.">
        <title>Highly accurate genome sequences of Escherichia coli K-12 strains MG1655 and W3110.</title>
        <authorList>
            <person name="Hayashi K."/>
            <person name="Morooka N."/>
            <person name="Yamamoto Y."/>
            <person name="Fujita K."/>
            <person name="Isono K."/>
            <person name="Choi S."/>
            <person name="Ohtsubo E."/>
            <person name="Baba T."/>
            <person name="Wanner B.L."/>
            <person name="Mori H."/>
            <person name="Horiuchi T."/>
        </authorList>
    </citation>
    <scope>NUCLEOTIDE SEQUENCE [LARGE SCALE GENOMIC DNA]</scope>
    <source>
        <strain>K12 / W3110 / ATCC 27325 / DSM 5911</strain>
    </source>
</reference>
<reference key="8">
    <citation type="journal article" date="1997" name="Electrophoresis">
        <title>Comparing the predicted and observed properties of proteins encoded in the genome of Escherichia coli K-12.</title>
        <authorList>
            <person name="Link A.J."/>
            <person name="Robison K."/>
            <person name="Church G.M."/>
        </authorList>
    </citation>
    <scope>PROTEIN SEQUENCE OF 1-12</scope>
    <source>
        <strain>K12 / EMG2</strain>
    </source>
</reference>
<reference key="9">
    <citation type="journal article" date="1991" name="Biochemistry">
        <title>Site-directed mutagenesis of Escherichia coli aspartate aminotransferase: role of Tyr70 in the catalytic processes.</title>
        <authorList>
            <person name="Inoue K."/>
            <person name="Kuramitsu S."/>
            <person name="Okamoto A."/>
            <person name="Hirotsu K."/>
            <person name="Higuchi T."/>
            <person name="Kagamiyama H."/>
        </authorList>
    </citation>
    <scope>MUTAGENESIS OF TYR-65</scope>
</reference>
<reference key="10">
    <citation type="journal article" date="1991" name="J. Biol. Chem.">
        <title>The role of His143 in the catalytic mechanism of Escherichia coli aspartate aminotransferase.</title>
        <authorList>
            <person name="Yano T."/>
            <person name="Kuramitsu S."/>
            <person name="Tanase S."/>
            <person name="Morino Y."/>
            <person name="Hiromi K."/>
            <person name="Kagamiyama H."/>
        </authorList>
    </citation>
    <scope>MUTAGENESIS OF HIS-133</scope>
</reference>
<reference key="11">
    <citation type="journal article" date="1997" name="Electrophoresis">
        <title>Escherichia coli proteome analysis using the gene-protein database.</title>
        <authorList>
            <person name="VanBogelen R.A."/>
            <person name="Abshire K.Z."/>
            <person name="Moldover B."/>
            <person name="Olson E.R."/>
            <person name="Neidhardt F.C."/>
        </authorList>
    </citation>
    <scope>IDENTIFICATION BY 2D-GEL</scope>
</reference>
<reference key="12">
    <citation type="journal article" date="1999" name="Biochim. Biophys. Acta">
        <title>The aspartate aminotransferase-catalysed exchange of the alpha-protons of aspartate and glutamate: the effects of the R386A and R292V mutations on this exchange reaction.</title>
        <authorList>
            <person name="Mahon M.M."/>
            <person name="Graber R."/>
            <person name="Christen P."/>
            <person name="Malthouse J.P."/>
        </authorList>
    </citation>
    <scope>CATALYTIC ACTIVITY</scope>
    <scope>MUTAGENESIS OF ARG-280 AND ARG-374</scope>
</reference>
<reference key="13">
    <citation type="journal article" date="2015" name="Cell Biochem. Biophys.">
        <title>Construction of 2,4,6-trinitrotoluene biosensors with novel sensing elements from Escherichia coli K-12 MG1655.</title>
        <authorList>
            <person name="Tan J."/>
            <person name="Kan N."/>
            <person name="Wang W."/>
            <person name="Ling J."/>
            <person name="Qu G."/>
            <person name="Jin J."/>
            <person name="Shao Y."/>
            <person name="Liu G."/>
            <person name="Chen H."/>
        </authorList>
    </citation>
    <scope>INDUCTION BY 2,4,6-TRINITROTOLUENE</scope>
    <scope>BIOTECHNOLOGY</scope>
    <source>
        <strain>K12 / MG1655 / ATCC 47076</strain>
    </source>
</reference>
<reference key="14">
    <citation type="journal article" date="1989" name="Biochemistry">
        <title>2.8-A-resolution crystal structure of an active-site mutant of aspartate aminotransferase from Escherichia coli.</title>
        <authorList>
            <person name="Smith D.L."/>
            <person name="Almo S.C."/>
            <person name="Toney M.D."/>
            <person name="Ringe D."/>
        </authorList>
    </citation>
    <scope>X-RAY CRYSTALLOGRAPHY (2.8 ANGSTROMS) OF MUTANT ALA-246</scope>
</reference>
<reference key="15">
    <citation type="journal article" date="1991" name="Biochemistry">
        <title>Activity and structure of the active-site mutants R386Y and R386F of Escherichia coli aspartate aminotransferase.</title>
        <authorList>
            <person name="Danishefsky A.T."/>
            <person name="Onnufer J.J."/>
            <person name="Petsko G.A."/>
            <person name="Ringe D."/>
        </authorList>
    </citation>
    <scope>X-RAY CRYSTALLOGRAPHY (2.5 ANGSTROMS)</scope>
    <scope>MUTAGENESIS OF ARG-374</scope>
</reference>
<reference key="16">
    <citation type="journal article" date="1999" name="J. Biol. Chem.">
        <title>Redesigning the substrate specificity of an enzyme by cumulative effects of the mutations of non-active site residues.</title>
        <authorList>
            <person name="Oue S."/>
            <person name="Okamoto A."/>
            <person name="Yano T."/>
            <person name="Kagamiyama H."/>
        </authorList>
    </citation>
    <scope>X-RAY CRYSTALLOGRAPHY (2.4 ANGSTROMS) OF MUTANT</scope>
</reference>
<reference key="17">
    <citation type="journal article" date="2001" name="Biochemistry">
        <title>Strain is more important than electrostatic interaction in controlling the pKa of the catalytic group in aspartate aminotransferase.</title>
        <authorList>
            <person name="Mizuguchi H."/>
            <person name="Hayashi H."/>
            <person name="Okada K."/>
            <person name="Miyahara I."/>
            <person name="Hirotsu K."/>
            <person name="Kagamiyama H."/>
        </authorList>
    </citation>
    <scope>X-RAY CRYSTALLOGRAPHY (2.0 ANGSTROMS) OF MUTANTS ALA-183/PHE-214; ALA-183/LEU-280; ALA-183/LEU-374 AND ALA-183/LEU-280/LEU-374 IN COMPLEXES WITH PYRIDOXAL PHOSPHATE</scope>
    <scope>COFACTOR</scope>
    <scope>PYRIDOXAL PHOSPHATE AT LYS-246</scope>
</reference>
<reference key="18">
    <citation type="journal article" date="2007" name="Biochemistry">
        <title>Inactivation of Escherichia coli L-aspartate aminotransferase by (S)-4-amino-4,5-dihydro-2-thiophenecarboxylic acid reveals 'a tale of two mechanisms'.</title>
        <authorList>
            <person name="Liu D."/>
            <person name="Pozharski E."/>
            <person name="Lepore B.W."/>
            <person name="Fu M."/>
            <person name="Silverman R.B."/>
            <person name="Petsko G.A."/>
            <person name="Ringe D."/>
        </authorList>
    </citation>
    <scope>X-RAY CRYSTALLOGRAPHY (1.4 ANGSTROMS) IN COMPLEX WITH PYRIDOXAL PHOSPHATE AND SADTA</scope>
    <scope>PYRIDOXAL PHOSPHATE AT LYS-246</scope>
</reference>
<accession>P00509</accession>